<proteinExistence type="inferred from homology"/>
<protein>
    <recommendedName>
        <fullName evidence="1">UDP-N-acetylmuramate--L-alanine ligase</fullName>
        <ecNumber evidence="1">6.3.2.8</ecNumber>
    </recommendedName>
    <alternativeName>
        <fullName evidence="1">UDP-N-acetylmuramoyl-L-alanine synthetase</fullName>
    </alternativeName>
</protein>
<organism>
    <name type="scientific">Bacillus cereus (strain B4264)</name>
    <dbReference type="NCBI Taxonomy" id="405532"/>
    <lineage>
        <taxon>Bacteria</taxon>
        <taxon>Bacillati</taxon>
        <taxon>Bacillota</taxon>
        <taxon>Bacilli</taxon>
        <taxon>Bacillales</taxon>
        <taxon>Bacillaceae</taxon>
        <taxon>Bacillus</taxon>
        <taxon>Bacillus cereus group</taxon>
    </lineage>
</organism>
<name>MURC_BACC4</name>
<dbReference type="EC" id="6.3.2.8" evidence="1"/>
<dbReference type="EMBL" id="CP001176">
    <property type="protein sequence ID" value="ACK61324.1"/>
    <property type="molecule type" value="Genomic_DNA"/>
</dbReference>
<dbReference type="RefSeq" id="WP_000219468.1">
    <property type="nucleotide sequence ID" value="NZ_VEHB01000005.1"/>
</dbReference>
<dbReference type="SMR" id="B7H746"/>
<dbReference type="KEGG" id="bcb:BCB4264_A4799"/>
<dbReference type="HOGENOM" id="CLU_028104_1_0_9"/>
<dbReference type="UniPathway" id="UPA00219"/>
<dbReference type="Proteomes" id="UP000007096">
    <property type="component" value="Chromosome"/>
</dbReference>
<dbReference type="GO" id="GO:0005737">
    <property type="term" value="C:cytoplasm"/>
    <property type="evidence" value="ECO:0007669"/>
    <property type="project" value="UniProtKB-SubCell"/>
</dbReference>
<dbReference type="GO" id="GO:0005524">
    <property type="term" value="F:ATP binding"/>
    <property type="evidence" value="ECO:0007669"/>
    <property type="project" value="UniProtKB-UniRule"/>
</dbReference>
<dbReference type="GO" id="GO:0008763">
    <property type="term" value="F:UDP-N-acetylmuramate-L-alanine ligase activity"/>
    <property type="evidence" value="ECO:0007669"/>
    <property type="project" value="UniProtKB-UniRule"/>
</dbReference>
<dbReference type="GO" id="GO:0051301">
    <property type="term" value="P:cell division"/>
    <property type="evidence" value="ECO:0007669"/>
    <property type="project" value="UniProtKB-KW"/>
</dbReference>
<dbReference type="GO" id="GO:0071555">
    <property type="term" value="P:cell wall organization"/>
    <property type="evidence" value="ECO:0007669"/>
    <property type="project" value="UniProtKB-KW"/>
</dbReference>
<dbReference type="GO" id="GO:0009252">
    <property type="term" value="P:peptidoglycan biosynthetic process"/>
    <property type="evidence" value="ECO:0007669"/>
    <property type="project" value="UniProtKB-UniRule"/>
</dbReference>
<dbReference type="GO" id="GO:0008360">
    <property type="term" value="P:regulation of cell shape"/>
    <property type="evidence" value="ECO:0007669"/>
    <property type="project" value="UniProtKB-KW"/>
</dbReference>
<dbReference type="Gene3D" id="3.90.190.20">
    <property type="entry name" value="Mur ligase, C-terminal domain"/>
    <property type="match status" value="1"/>
</dbReference>
<dbReference type="Gene3D" id="3.40.1190.10">
    <property type="entry name" value="Mur-like, catalytic domain"/>
    <property type="match status" value="1"/>
</dbReference>
<dbReference type="Gene3D" id="3.40.50.720">
    <property type="entry name" value="NAD(P)-binding Rossmann-like Domain"/>
    <property type="match status" value="1"/>
</dbReference>
<dbReference type="HAMAP" id="MF_00046">
    <property type="entry name" value="MurC"/>
    <property type="match status" value="1"/>
</dbReference>
<dbReference type="InterPro" id="IPR036565">
    <property type="entry name" value="Mur-like_cat_sf"/>
</dbReference>
<dbReference type="InterPro" id="IPR004101">
    <property type="entry name" value="Mur_ligase_C"/>
</dbReference>
<dbReference type="InterPro" id="IPR036615">
    <property type="entry name" value="Mur_ligase_C_dom_sf"/>
</dbReference>
<dbReference type="InterPro" id="IPR013221">
    <property type="entry name" value="Mur_ligase_cen"/>
</dbReference>
<dbReference type="InterPro" id="IPR000713">
    <property type="entry name" value="Mur_ligase_N"/>
</dbReference>
<dbReference type="InterPro" id="IPR050061">
    <property type="entry name" value="MurCDEF_pg_biosynth"/>
</dbReference>
<dbReference type="InterPro" id="IPR005758">
    <property type="entry name" value="UDP-N-AcMur_Ala_ligase_MurC"/>
</dbReference>
<dbReference type="NCBIfam" id="TIGR01082">
    <property type="entry name" value="murC"/>
    <property type="match status" value="1"/>
</dbReference>
<dbReference type="PANTHER" id="PTHR43445:SF3">
    <property type="entry name" value="UDP-N-ACETYLMURAMATE--L-ALANINE LIGASE"/>
    <property type="match status" value="1"/>
</dbReference>
<dbReference type="PANTHER" id="PTHR43445">
    <property type="entry name" value="UDP-N-ACETYLMURAMATE--L-ALANINE LIGASE-RELATED"/>
    <property type="match status" value="1"/>
</dbReference>
<dbReference type="Pfam" id="PF01225">
    <property type="entry name" value="Mur_ligase"/>
    <property type="match status" value="1"/>
</dbReference>
<dbReference type="Pfam" id="PF02875">
    <property type="entry name" value="Mur_ligase_C"/>
    <property type="match status" value="1"/>
</dbReference>
<dbReference type="Pfam" id="PF08245">
    <property type="entry name" value="Mur_ligase_M"/>
    <property type="match status" value="1"/>
</dbReference>
<dbReference type="SUPFAM" id="SSF51984">
    <property type="entry name" value="MurCD N-terminal domain"/>
    <property type="match status" value="1"/>
</dbReference>
<dbReference type="SUPFAM" id="SSF53623">
    <property type="entry name" value="MurD-like peptide ligases, catalytic domain"/>
    <property type="match status" value="1"/>
</dbReference>
<dbReference type="SUPFAM" id="SSF53244">
    <property type="entry name" value="MurD-like peptide ligases, peptide-binding domain"/>
    <property type="match status" value="1"/>
</dbReference>
<keyword id="KW-0067">ATP-binding</keyword>
<keyword id="KW-0131">Cell cycle</keyword>
<keyword id="KW-0132">Cell division</keyword>
<keyword id="KW-0133">Cell shape</keyword>
<keyword id="KW-0961">Cell wall biogenesis/degradation</keyword>
<keyword id="KW-0963">Cytoplasm</keyword>
<keyword id="KW-0436">Ligase</keyword>
<keyword id="KW-0547">Nucleotide-binding</keyword>
<keyword id="KW-0573">Peptidoglycan synthesis</keyword>
<feature type="chain" id="PRO_1000116617" description="UDP-N-acetylmuramate--L-alanine ligase">
    <location>
        <begin position="1"/>
        <end position="436"/>
    </location>
</feature>
<feature type="binding site" evidence="1">
    <location>
        <begin position="108"/>
        <end position="114"/>
    </location>
    <ligand>
        <name>ATP</name>
        <dbReference type="ChEBI" id="CHEBI:30616"/>
    </ligand>
</feature>
<accession>B7H746</accession>
<evidence type="ECO:0000255" key="1">
    <source>
        <dbReference type="HAMAP-Rule" id="MF_00046"/>
    </source>
</evidence>
<reference key="1">
    <citation type="submission" date="2008-10" db="EMBL/GenBank/DDBJ databases">
        <title>Genome sequence of Bacillus cereus B4264.</title>
        <authorList>
            <person name="Dodson R.J."/>
            <person name="Durkin A.S."/>
            <person name="Rosovitz M.J."/>
            <person name="Rasko D.A."/>
            <person name="Hoffmaster A."/>
            <person name="Ravel J."/>
            <person name="Sutton G."/>
        </authorList>
    </citation>
    <scope>NUCLEOTIDE SEQUENCE [LARGE SCALE GENOMIC DNA]</scope>
    <source>
        <strain>B4264</strain>
    </source>
</reference>
<comment type="function">
    <text evidence="1">Cell wall formation.</text>
</comment>
<comment type="catalytic activity">
    <reaction evidence="1">
        <text>UDP-N-acetyl-alpha-D-muramate + L-alanine + ATP = UDP-N-acetyl-alpha-D-muramoyl-L-alanine + ADP + phosphate + H(+)</text>
        <dbReference type="Rhea" id="RHEA:23372"/>
        <dbReference type="ChEBI" id="CHEBI:15378"/>
        <dbReference type="ChEBI" id="CHEBI:30616"/>
        <dbReference type="ChEBI" id="CHEBI:43474"/>
        <dbReference type="ChEBI" id="CHEBI:57972"/>
        <dbReference type="ChEBI" id="CHEBI:70757"/>
        <dbReference type="ChEBI" id="CHEBI:83898"/>
        <dbReference type="ChEBI" id="CHEBI:456216"/>
        <dbReference type="EC" id="6.3.2.8"/>
    </reaction>
</comment>
<comment type="pathway">
    <text evidence="1">Cell wall biogenesis; peptidoglycan biosynthesis.</text>
</comment>
<comment type="subcellular location">
    <subcellularLocation>
        <location evidence="1">Cytoplasm</location>
    </subcellularLocation>
</comment>
<comment type="similarity">
    <text evidence="1">Belongs to the MurCDEF family.</text>
</comment>
<sequence length="436" mass="49200">MTVYHFVGIKGTGMSSLAQILHDMKHTVQGSDYEKRFFTQTALEKRSISILPFDKNNVEEGQVIIAGNAFPDTHEEIVAAKELNIPVHRYHHFLGDLMSQYTSVAVTGAHGKTSTTGLLAHVMQGAHPTSYLIGDGTGHGVENSKYFVFEACEYRRHFLSYNPDYAIMTNIDFDHPDYFADINDVFSAFQEMALQVKKGIIACGDDEELQKIQAKVPVIFYGFGEDNDFQARNIQKRTDGTIFDVFVRNTYYDTFKITGYGNHSVLNALAVIALCHYENVDVEAVKHQLTTFEGVKRRFNEKPMGEQVIIDDYAHHPTEINATIEAARQKHPEREIVAVFQPHTFSRTEKFLDEFAESLSKADQVYLCDIFGSARENKGELTIEDLQKRIDGAELITDTTTDVLKKHKNGVLIFMGAGDIQKFEAAYVKEVQVAEK</sequence>
<gene>
    <name evidence="1" type="primary">murC</name>
    <name type="ordered locus">BCB4264_A4799</name>
</gene>